<reference key="1">
    <citation type="journal article" date="2002" name="J. Bacteriol.">
        <title>Whole-genome comparison of Mycobacterium tuberculosis clinical and laboratory strains.</title>
        <authorList>
            <person name="Fleischmann R.D."/>
            <person name="Alland D."/>
            <person name="Eisen J.A."/>
            <person name="Carpenter L."/>
            <person name="White O."/>
            <person name="Peterson J.D."/>
            <person name="DeBoy R.T."/>
            <person name="Dodson R.J."/>
            <person name="Gwinn M.L."/>
            <person name="Haft D.H."/>
            <person name="Hickey E.K."/>
            <person name="Kolonay J.F."/>
            <person name="Nelson W.C."/>
            <person name="Umayam L.A."/>
            <person name="Ermolaeva M.D."/>
            <person name="Salzberg S.L."/>
            <person name="Delcher A."/>
            <person name="Utterback T.R."/>
            <person name="Weidman J.F."/>
            <person name="Khouri H.M."/>
            <person name="Gill J."/>
            <person name="Mikula A."/>
            <person name="Bishai W."/>
            <person name="Jacobs W.R. Jr."/>
            <person name="Venter J.C."/>
            <person name="Fraser C.M."/>
        </authorList>
    </citation>
    <scope>NUCLEOTIDE SEQUENCE [LARGE SCALE GENOMIC DNA]</scope>
    <source>
        <strain>CDC 1551 / Oshkosh</strain>
    </source>
</reference>
<proteinExistence type="inferred from homology"/>
<comment type="function">
    <text evidence="1">Part of the ABC transporter complex PstSACB involved in phosphate import. Responsible for energy coupling to the transport system.</text>
</comment>
<comment type="catalytic activity">
    <reaction evidence="1">
        <text>phosphate(out) + ATP + H2O = ADP + 2 phosphate(in) + H(+)</text>
        <dbReference type="Rhea" id="RHEA:24440"/>
        <dbReference type="ChEBI" id="CHEBI:15377"/>
        <dbReference type="ChEBI" id="CHEBI:15378"/>
        <dbReference type="ChEBI" id="CHEBI:30616"/>
        <dbReference type="ChEBI" id="CHEBI:43474"/>
        <dbReference type="ChEBI" id="CHEBI:456216"/>
        <dbReference type="EC" id="7.3.2.1"/>
    </reaction>
</comment>
<comment type="subunit">
    <text evidence="1">The complex is composed of two ATP-binding proteins (PstB), two transmembrane proteins (PstC and PstA) and a solute-binding protein (PstS).</text>
</comment>
<comment type="subcellular location">
    <subcellularLocation>
        <location evidence="1">Cell membrane</location>
        <topology evidence="1">Peripheral membrane protein</topology>
    </subcellularLocation>
</comment>
<comment type="similarity">
    <text evidence="1">Belongs to the ABC transporter superfamily. Phosphate importer (TC 3.A.1.7) family.</text>
</comment>
<accession>P9WQL0</accession>
<accession>L0T7L4</accession>
<accession>O53832</accession>
<name>PSTB1_MYCTO</name>
<keyword id="KW-0067">ATP-binding</keyword>
<keyword id="KW-1003">Cell membrane</keyword>
<keyword id="KW-0472">Membrane</keyword>
<keyword id="KW-0547">Nucleotide-binding</keyword>
<keyword id="KW-0592">Phosphate transport</keyword>
<keyword id="KW-1185">Reference proteome</keyword>
<keyword id="KW-1278">Translocase</keyword>
<keyword id="KW-0813">Transport</keyword>
<sequence length="258" mass="28061">MAKRLDLTDVNIYYGSFHAVADVSLAILPRSVTAFIGPSGCGKTTVLRTLNRMHEVIPGARVEGAVLLDDQDIYAPGIDPVGVRRAIGMVFQRPNPFPAMSIRNNVVAGLKLQGVRNRKVLDDTAESSLRGANLWDEVKDRLDKPGGGLSGGQQQRLCIARAIAVQPDVLLMDEPCSSLDPISTMAIEDLISELKQQYTIVIVTHNMQQAARVSDQTAFFNLEAVGKPGRLVEIASTEKIFSNPNQKATEDYISGRFG</sequence>
<dbReference type="EC" id="7.3.2.1" evidence="1"/>
<dbReference type="EMBL" id="AE000516">
    <property type="protein sequence ID" value="AAK45084.1"/>
    <property type="molecule type" value="Genomic_DNA"/>
</dbReference>
<dbReference type="PIR" id="D70810">
    <property type="entry name" value="D70810"/>
</dbReference>
<dbReference type="SMR" id="P9WQL0"/>
<dbReference type="KEGG" id="mtc:MT0842"/>
<dbReference type="PATRIC" id="fig|83331.31.peg.901"/>
<dbReference type="HOGENOM" id="CLU_000604_1_22_11"/>
<dbReference type="Proteomes" id="UP000001020">
    <property type="component" value="Chromosome"/>
</dbReference>
<dbReference type="GO" id="GO:0005886">
    <property type="term" value="C:plasma membrane"/>
    <property type="evidence" value="ECO:0007669"/>
    <property type="project" value="UniProtKB-SubCell"/>
</dbReference>
<dbReference type="GO" id="GO:0005524">
    <property type="term" value="F:ATP binding"/>
    <property type="evidence" value="ECO:0007669"/>
    <property type="project" value="UniProtKB-KW"/>
</dbReference>
<dbReference type="GO" id="GO:0016887">
    <property type="term" value="F:ATP hydrolysis activity"/>
    <property type="evidence" value="ECO:0007669"/>
    <property type="project" value="InterPro"/>
</dbReference>
<dbReference type="GO" id="GO:0015415">
    <property type="term" value="F:ATPase-coupled phosphate ion transmembrane transporter activity"/>
    <property type="evidence" value="ECO:0007669"/>
    <property type="project" value="UniProtKB-EC"/>
</dbReference>
<dbReference type="GO" id="GO:0035435">
    <property type="term" value="P:phosphate ion transmembrane transport"/>
    <property type="evidence" value="ECO:0007669"/>
    <property type="project" value="InterPro"/>
</dbReference>
<dbReference type="CDD" id="cd03260">
    <property type="entry name" value="ABC_PstB_phosphate_transporter"/>
    <property type="match status" value="1"/>
</dbReference>
<dbReference type="FunFam" id="3.40.50.300:FF:000132">
    <property type="entry name" value="Phosphate import ATP-binding protein PstB"/>
    <property type="match status" value="1"/>
</dbReference>
<dbReference type="Gene3D" id="3.40.50.300">
    <property type="entry name" value="P-loop containing nucleotide triphosphate hydrolases"/>
    <property type="match status" value="1"/>
</dbReference>
<dbReference type="InterPro" id="IPR003593">
    <property type="entry name" value="AAA+_ATPase"/>
</dbReference>
<dbReference type="InterPro" id="IPR003439">
    <property type="entry name" value="ABC_transporter-like_ATP-bd"/>
</dbReference>
<dbReference type="InterPro" id="IPR017871">
    <property type="entry name" value="ABC_transporter-like_CS"/>
</dbReference>
<dbReference type="InterPro" id="IPR027417">
    <property type="entry name" value="P-loop_NTPase"/>
</dbReference>
<dbReference type="InterPro" id="IPR005670">
    <property type="entry name" value="PstB-like"/>
</dbReference>
<dbReference type="NCBIfam" id="TIGR00972">
    <property type="entry name" value="3a0107s01c2"/>
    <property type="match status" value="1"/>
</dbReference>
<dbReference type="PANTHER" id="PTHR43423">
    <property type="entry name" value="ABC TRANSPORTER I FAMILY MEMBER 17"/>
    <property type="match status" value="1"/>
</dbReference>
<dbReference type="PANTHER" id="PTHR43423:SF1">
    <property type="entry name" value="ABC TRANSPORTER I FAMILY MEMBER 17"/>
    <property type="match status" value="1"/>
</dbReference>
<dbReference type="Pfam" id="PF00005">
    <property type="entry name" value="ABC_tran"/>
    <property type="match status" value="1"/>
</dbReference>
<dbReference type="SMART" id="SM00382">
    <property type="entry name" value="AAA"/>
    <property type="match status" value="1"/>
</dbReference>
<dbReference type="SUPFAM" id="SSF52540">
    <property type="entry name" value="P-loop containing nucleoside triphosphate hydrolases"/>
    <property type="match status" value="1"/>
</dbReference>
<dbReference type="PROSITE" id="PS00211">
    <property type="entry name" value="ABC_TRANSPORTER_1"/>
    <property type="match status" value="1"/>
</dbReference>
<dbReference type="PROSITE" id="PS50893">
    <property type="entry name" value="ABC_TRANSPORTER_2"/>
    <property type="match status" value="1"/>
</dbReference>
<dbReference type="PROSITE" id="PS51238">
    <property type="entry name" value="PSTB"/>
    <property type="match status" value="1"/>
</dbReference>
<protein>
    <recommendedName>
        <fullName evidence="1">Phosphate import ATP-binding protein PstB 1</fullName>
        <ecNumber evidence="1">7.3.2.1</ecNumber>
    </recommendedName>
    <alternativeName>
        <fullName evidence="1">ABC phosphate transporter 1</fullName>
    </alternativeName>
    <alternativeName>
        <fullName evidence="1">Phosphate-transporting ATPase 1</fullName>
    </alternativeName>
</protein>
<gene>
    <name evidence="1" type="primary">pstB1</name>
    <name type="synonym">phoT</name>
    <name type="ordered locus">MT0842</name>
</gene>
<organism>
    <name type="scientific">Mycobacterium tuberculosis (strain CDC 1551 / Oshkosh)</name>
    <dbReference type="NCBI Taxonomy" id="83331"/>
    <lineage>
        <taxon>Bacteria</taxon>
        <taxon>Bacillati</taxon>
        <taxon>Actinomycetota</taxon>
        <taxon>Actinomycetes</taxon>
        <taxon>Mycobacteriales</taxon>
        <taxon>Mycobacteriaceae</taxon>
        <taxon>Mycobacterium</taxon>
        <taxon>Mycobacterium tuberculosis complex</taxon>
    </lineage>
</organism>
<evidence type="ECO:0000255" key="1">
    <source>
        <dbReference type="HAMAP-Rule" id="MF_01702"/>
    </source>
</evidence>
<feature type="chain" id="PRO_0000426757" description="Phosphate import ATP-binding protein PstB 1">
    <location>
        <begin position="1"/>
        <end position="258"/>
    </location>
</feature>
<feature type="domain" description="ABC transporter" evidence="1">
    <location>
        <begin position="5"/>
        <end position="247"/>
    </location>
</feature>
<feature type="binding site" evidence="1">
    <location>
        <begin position="37"/>
        <end position="44"/>
    </location>
    <ligand>
        <name>ATP</name>
        <dbReference type="ChEBI" id="CHEBI:30616"/>
    </ligand>
</feature>